<feature type="chain" id="PRO_0000266725" description="Small ribosomal subunit protein bS21">
    <location>
        <begin position="1"/>
        <end position="70"/>
    </location>
</feature>
<protein>
    <recommendedName>
        <fullName evidence="1">Small ribosomal subunit protein bS21</fullName>
    </recommendedName>
    <alternativeName>
        <fullName evidence="2">30S ribosomal protein S21</fullName>
    </alternativeName>
</protein>
<gene>
    <name evidence="1" type="primary">rpsU</name>
    <name type="ordered locus">Bpro_3284</name>
</gene>
<reference key="1">
    <citation type="journal article" date="2008" name="Appl. Environ. Microbiol.">
        <title>The genome of Polaromonas sp. strain JS666: insights into the evolution of a hydrocarbon- and xenobiotic-degrading bacterium, and features of relevance to biotechnology.</title>
        <authorList>
            <person name="Mattes T.E."/>
            <person name="Alexander A.K."/>
            <person name="Richardson P.M."/>
            <person name="Munk A.C."/>
            <person name="Han C.S."/>
            <person name="Stothard P."/>
            <person name="Coleman N.V."/>
        </authorList>
    </citation>
    <scope>NUCLEOTIDE SEQUENCE [LARGE SCALE GENOMIC DNA]</scope>
    <source>
        <strain>JS666 / ATCC BAA-500</strain>
    </source>
</reference>
<sequence>MTTIRVKDNEPFDVALRRFKRTIEKLGLLTDLRAREFYEKPTAERKRKKAAAVKRNYKRIRAMQLPKKLY</sequence>
<comment type="similarity">
    <text evidence="1">Belongs to the bacterial ribosomal protein bS21 family.</text>
</comment>
<organism>
    <name type="scientific">Polaromonas sp. (strain JS666 / ATCC BAA-500)</name>
    <dbReference type="NCBI Taxonomy" id="296591"/>
    <lineage>
        <taxon>Bacteria</taxon>
        <taxon>Pseudomonadati</taxon>
        <taxon>Pseudomonadota</taxon>
        <taxon>Betaproteobacteria</taxon>
        <taxon>Burkholderiales</taxon>
        <taxon>Comamonadaceae</taxon>
        <taxon>Polaromonas</taxon>
    </lineage>
</organism>
<keyword id="KW-1185">Reference proteome</keyword>
<keyword id="KW-0687">Ribonucleoprotein</keyword>
<keyword id="KW-0689">Ribosomal protein</keyword>
<evidence type="ECO:0000255" key="1">
    <source>
        <dbReference type="HAMAP-Rule" id="MF_00358"/>
    </source>
</evidence>
<evidence type="ECO:0000305" key="2"/>
<accession>Q127U4</accession>
<proteinExistence type="inferred from homology"/>
<dbReference type="EMBL" id="CP000316">
    <property type="protein sequence ID" value="ABE45198.1"/>
    <property type="molecule type" value="Genomic_DNA"/>
</dbReference>
<dbReference type="RefSeq" id="WP_011484193.1">
    <property type="nucleotide sequence ID" value="NC_007948.1"/>
</dbReference>
<dbReference type="SMR" id="Q127U4"/>
<dbReference type="STRING" id="296591.Bpro_3284"/>
<dbReference type="KEGG" id="pol:Bpro_3284"/>
<dbReference type="eggNOG" id="COG0828">
    <property type="taxonomic scope" value="Bacteria"/>
</dbReference>
<dbReference type="HOGENOM" id="CLU_159258_1_2_4"/>
<dbReference type="OrthoDB" id="9799244at2"/>
<dbReference type="Proteomes" id="UP000001983">
    <property type="component" value="Chromosome"/>
</dbReference>
<dbReference type="GO" id="GO:1990904">
    <property type="term" value="C:ribonucleoprotein complex"/>
    <property type="evidence" value="ECO:0007669"/>
    <property type="project" value="UniProtKB-KW"/>
</dbReference>
<dbReference type="GO" id="GO:0005840">
    <property type="term" value="C:ribosome"/>
    <property type="evidence" value="ECO:0007669"/>
    <property type="project" value="UniProtKB-KW"/>
</dbReference>
<dbReference type="GO" id="GO:0003735">
    <property type="term" value="F:structural constituent of ribosome"/>
    <property type="evidence" value="ECO:0007669"/>
    <property type="project" value="InterPro"/>
</dbReference>
<dbReference type="GO" id="GO:0006412">
    <property type="term" value="P:translation"/>
    <property type="evidence" value="ECO:0007669"/>
    <property type="project" value="UniProtKB-UniRule"/>
</dbReference>
<dbReference type="Gene3D" id="1.20.5.1150">
    <property type="entry name" value="Ribosomal protein S8"/>
    <property type="match status" value="1"/>
</dbReference>
<dbReference type="HAMAP" id="MF_00358">
    <property type="entry name" value="Ribosomal_bS21"/>
    <property type="match status" value="1"/>
</dbReference>
<dbReference type="InterPro" id="IPR001911">
    <property type="entry name" value="Ribosomal_bS21"/>
</dbReference>
<dbReference type="InterPro" id="IPR018278">
    <property type="entry name" value="Ribosomal_bS21_CS"/>
</dbReference>
<dbReference type="InterPro" id="IPR038380">
    <property type="entry name" value="Ribosomal_bS21_sf"/>
</dbReference>
<dbReference type="NCBIfam" id="TIGR00030">
    <property type="entry name" value="S21p"/>
    <property type="match status" value="1"/>
</dbReference>
<dbReference type="PANTHER" id="PTHR21109">
    <property type="entry name" value="MITOCHONDRIAL 28S RIBOSOMAL PROTEIN S21"/>
    <property type="match status" value="1"/>
</dbReference>
<dbReference type="PANTHER" id="PTHR21109:SF22">
    <property type="entry name" value="SMALL RIBOSOMAL SUBUNIT PROTEIN BS21"/>
    <property type="match status" value="1"/>
</dbReference>
<dbReference type="Pfam" id="PF01165">
    <property type="entry name" value="Ribosomal_S21"/>
    <property type="match status" value="1"/>
</dbReference>
<dbReference type="PRINTS" id="PR00976">
    <property type="entry name" value="RIBOSOMALS21"/>
</dbReference>
<dbReference type="PROSITE" id="PS01181">
    <property type="entry name" value="RIBOSOMAL_S21"/>
    <property type="match status" value="1"/>
</dbReference>
<name>RS21_POLSJ</name>